<reference key="1">
    <citation type="submission" date="2008-05" db="EMBL/GenBank/DDBJ databases">
        <title>Complete sequence of chromosome 1 of Ralstonia pickettii 12J.</title>
        <authorList>
            <person name="Lucas S."/>
            <person name="Copeland A."/>
            <person name="Lapidus A."/>
            <person name="Glavina del Rio T."/>
            <person name="Dalin E."/>
            <person name="Tice H."/>
            <person name="Bruce D."/>
            <person name="Goodwin L."/>
            <person name="Pitluck S."/>
            <person name="Meincke L."/>
            <person name="Brettin T."/>
            <person name="Detter J.C."/>
            <person name="Han C."/>
            <person name="Kuske C.R."/>
            <person name="Schmutz J."/>
            <person name="Larimer F."/>
            <person name="Land M."/>
            <person name="Hauser L."/>
            <person name="Kyrpides N."/>
            <person name="Mikhailova N."/>
            <person name="Marsh T."/>
            <person name="Richardson P."/>
        </authorList>
    </citation>
    <scope>NUCLEOTIDE SEQUENCE [LARGE SCALE GENOMIC DNA]</scope>
    <source>
        <strain>12J</strain>
    </source>
</reference>
<keyword id="KW-0378">Hydrolase</keyword>
<keyword id="KW-0511">Multifunctional enzyme</keyword>
<keyword id="KW-0658">Purine biosynthesis</keyword>
<keyword id="KW-0808">Transferase</keyword>
<feature type="chain" id="PRO_1000096085" description="Bifunctional purine biosynthesis protein PurH">
    <location>
        <begin position="1"/>
        <end position="524"/>
    </location>
</feature>
<feature type="domain" description="MGS-like" evidence="2">
    <location>
        <begin position="1"/>
        <end position="145"/>
    </location>
</feature>
<evidence type="ECO:0000255" key="1">
    <source>
        <dbReference type="HAMAP-Rule" id="MF_00139"/>
    </source>
</evidence>
<evidence type="ECO:0000255" key="2">
    <source>
        <dbReference type="PROSITE-ProRule" id="PRU01202"/>
    </source>
</evidence>
<gene>
    <name evidence="1" type="primary">purH</name>
    <name type="ordered locus">Rpic_0380</name>
</gene>
<protein>
    <recommendedName>
        <fullName evidence="1">Bifunctional purine biosynthesis protein PurH</fullName>
    </recommendedName>
    <domain>
        <recommendedName>
            <fullName evidence="1">Phosphoribosylaminoimidazolecarboxamide formyltransferase</fullName>
            <ecNumber evidence="1">2.1.2.3</ecNumber>
        </recommendedName>
        <alternativeName>
            <fullName evidence="1">AICAR transformylase</fullName>
        </alternativeName>
    </domain>
    <domain>
        <recommendedName>
            <fullName evidence="1">IMP cyclohydrolase</fullName>
            <ecNumber evidence="1">3.5.4.10</ecNumber>
        </recommendedName>
        <alternativeName>
            <fullName evidence="1">ATIC</fullName>
        </alternativeName>
        <alternativeName>
            <fullName evidence="1">IMP synthase</fullName>
        </alternativeName>
        <alternativeName>
            <fullName evidence="1">Inosinicase</fullName>
        </alternativeName>
    </domain>
</protein>
<proteinExistence type="inferred from homology"/>
<accession>B2UFL5</accession>
<comment type="catalytic activity">
    <reaction evidence="1">
        <text>(6R)-10-formyltetrahydrofolate + 5-amino-1-(5-phospho-beta-D-ribosyl)imidazole-4-carboxamide = 5-formamido-1-(5-phospho-D-ribosyl)imidazole-4-carboxamide + (6S)-5,6,7,8-tetrahydrofolate</text>
        <dbReference type="Rhea" id="RHEA:22192"/>
        <dbReference type="ChEBI" id="CHEBI:57453"/>
        <dbReference type="ChEBI" id="CHEBI:58467"/>
        <dbReference type="ChEBI" id="CHEBI:58475"/>
        <dbReference type="ChEBI" id="CHEBI:195366"/>
        <dbReference type="EC" id="2.1.2.3"/>
    </reaction>
</comment>
<comment type="catalytic activity">
    <reaction evidence="1">
        <text>IMP + H2O = 5-formamido-1-(5-phospho-D-ribosyl)imidazole-4-carboxamide</text>
        <dbReference type="Rhea" id="RHEA:18445"/>
        <dbReference type="ChEBI" id="CHEBI:15377"/>
        <dbReference type="ChEBI" id="CHEBI:58053"/>
        <dbReference type="ChEBI" id="CHEBI:58467"/>
        <dbReference type="EC" id="3.5.4.10"/>
    </reaction>
</comment>
<comment type="pathway">
    <text evidence="1">Purine metabolism; IMP biosynthesis via de novo pathway; 5-formamido-1-(5-phospho-D-ribosyl)imidazole-4-carboxamide from 5-amino-1-(5-phospho-D-ribosyl)imidazole-4-carboxamide (10-formyl THF route): step 1/1.</text>
</comment>
<comment type="pathway">
    <text evidence="1">Purine metabolism; IMP biosynthesis via de novo pathway; IMP from 5-formamido-1-(5-phospho-D-ribosyl)imidazole-4-carboxamide: step 1/1.</text>
</comment>
<comment type="domain">
    <text evidence="1">The IMP cyclohydrolase activity resides in the N-terminal region.</text>
</comment>
<comment type="similarity">
    <text evidence="1">Belongs to the PurH family.</text>
</comment>
<dbReference type="EC" id="2.1.2.3" evidence="1"/>
<dbReference type="EC" id="3.5.4.10" evidence="1"/>
<dbReference type="EMBL" id="CP001068">
    <property type="protein sequence ID" value="ACD25538.1"/>
    <property type="molecule type" value="Genomic_DNA"/>
</dbReference>
<dbReference type="SMR" id="B2UFL5"/>
<dbReference type="STRING" id="402626.Rpic_0380"/>
<dbReference type="KEGG" id="rpi:Rpic_0380"/>
<dbReference type="eggNOG" id="COG0138">
    <property type="taxonomic scope" value="Bacteria"/>
</dbReference>
<dbReference type="HOGENOM" id="CLU_016316_5_2_4"/>
<dbReference type="UniPathway" id="UPA00074">
    <property type="reaction ID" value="UER00133"/>
</dbReference>
<dbReference type="UniPathway" id="UPA00074">
    <property type="reaction ID" value="UER00135"/>
</dbReference>
<dbReference type="GO" id="GO:0005829">
    <property type="term" value="C:cytosol"/>
    <property type="evidence" value="ECO:0007669"/>
    <property type="project" value="TreeGrafter"/>
</dbReference>
<dbReference type="GO" id="GO:0003937">
    <property type="term" value="F:IMP cyclohydrolase activity"/>
    <property type="evidence" value="ECO:0007669"/>
    <property type="project" value="UniProtKB-UniRule"/>
</dbReference>
<dbReference type="GO" id="GO:0004643">
    <property type="term" value="F:phosphoribosylaminoimidazolecarboxamide formyltransferase activity"/>
    <property type="evidence" value="ECO:0007669"/>
    <property type="project" value="UniProtKB-UniRule"/>
</dbReference>
<dbReference type="GO" id="GO:0006189">
    <property type="term" value="P:'de novo' IMP biosynthetic process"/>
    <property type="evidence" value="ECO:0007669"/>
    <property type="project" value="UniProtKB-UniRule"/>
</dbReference>
<dbReference type="CDD" id="cd01421">
    <property type="entry name" value="IMPCH"/>
    <property type="match status" value="1"/>
</dbReference>
<dbReference type="FunFam" id="3.40.140.20:FF:000001">
    <property type="entry name" value="Bifunctional purine biosynthesis protein PurH"/>
    <property type="match status" value="1"/>
</dbReference>
<dbReference type="FunFam" id="3.40.140.20:FF:000002">
    <property type="entry name" value="Bifunctional purine biosynthesis protein PurH"/>
    <property type="match status" value="1"/>
</dbReference>
<dbReference type="FunFam" id="3.40.50.1380:FF:000001">
    <property type="entry name" value="Bifunctional purine biosynthesis protein PurH"/>
    <property type="match status" value="1"/>
</dbReference>
<dbReference type="Gene3D" id="3.40.140.20">
    <property type="match status" value="2"/>
</dbReference>
<dbReference type="Gene3D" id="3.40.50.1380">
    <property type="entry name" value="Methylglyoxal synthase-like domain"/>
    <property type="match status" value="1"/>
</dbReference>
<dbReference type="HAMAP" id="MF_00139">
    <property type="entry name" value="PurH"/>
    <property type="match status" value="1"/>
</dbReference>
<dbReference type="InterPro" id="IPR024051">
    <property type="entry name" value="AICAR_Tfase_dup_dom_sf"/>
</dbReference>
<dbReference type="InterPro" id="IPR016193">
    <property type="entry name" value="Cytidine_deaminase-like"/>
</dbReference>
<dbReference type="InterPro" id="IPR011607">
    <property type="entry name" value="MGS-like_dom"/>
</dbReference>
<dbReference type="InterPro" id="IPR036914">
    <property type="entry name" value="MGS-like_dom_sf"/>
</dbReference>
<dbReference type="InterPro" id="IPR002695">
    <property type="entry name" value="PurH-like"/>
</dbReference>
<dbReference type="NCBIfam" id="NF002049">
    <property type="entry name" value="PRK00881.1"/>
    <property type="match status" value="1"/>
</dbReference>
<dbReference type="NCBIfam" id="TIGR00355">
    <property type="entry name" value="purH"/>
    <property type="match status" value="1"/>
</dbReference>
<dbReference type="PANTHER" id="PTHR11692:SF0">
    <property type="entry name" value="BIFUNCTIONAL PURINE BIOSYNTHESIS PROTEIN ATIC"/>
    <property type="match status" value="1"/>
</dbReference>
<dbReference type="PANTHER" id="PTHR11692">
    <property type="entry name" value="BIFUNCTIONAL PURINE BIOSYNTHESIS PROTEIN PURH"/>
    <property type="match status" value="1"/>
</dbReference>
<dbReference type="Pfam" id="PF01808">
    <property type="entry name" value="AICARFT_IMPCHas"/>
    <property type="match status" value="1"/>
</dbReference>
<dbReference type="Pfam" id="PF02142">
    <property type="entry name" value="MGS"/>
    <property type="match status" value="1"/>
</dbReference>
<dbReference type="PIRSF" id="PIRSF000414">
    <property type="entry name" value="AICARFT_IMPCHas"/>
    <property type="match status" value="1"/>
</dbReference>
<dbReference type="SMART" id="SM00798">
    <property type="entry name" value="AICARFT_IMPCHas"/>
    <property type="match status" value="1"/>
</dbReference>
<dbReference type="SMART" id="SM00851">
    <property type="entry name" value="MGS"/>
    <property type="match status" value="1"/>
</dbReference>
<dbReference type="SUPFAM" id="SSF53927">
    <property type="entry name" value="Cytidine deaminase-like"/>
    <property type="match status" value="1"/>
</dbReference>
<dbReference type="SUPFAM" id="SSF52335">
    <property type="entry name" value="Methylglyoxal synthase-like"/>
    <property type="match status" value="1"/>
</dbReference>
<dbReference type="PROSITE" id="PS51855">
    <property type="entry name" value="MGS"/>
    <property type="match status" value="1"/>
</dbReference>
<sequence>MIQQALLSVSDKTGIVDFARALHERGVKLLSTGGTAKLLAESSLPVTEVADYTGFPEMLDGRVKTLHPKVHGGILARRDLPEHMAALSEHSIPTIDLLVVNLYPFQQTVAKDECSLADAIENIDIGGPTMLRSAAKNHRDVTVIVDPADYATVLAEMQANNNTVGYETNFMLAKKVFAHTAQYDGAITNYLTSLGADKSHSTRSAYPQTLNLAFDKVQEMRYGENPHQSAAFYRDLKAVDGALANYKQLQGKELSYNNIADADAAWECVKSFDAAHGAACVIIKHANPCGVAIGGTAQEAYEKAFKTDSTSAFGGIIAFNVPLDEAAAQVVAKQFVEVLIAPGFSEGARAVFAAKQNVRVLEIPLGKGVNAYDFKRVGGGLLVQSPDAKNVQPSELRVVTKRHPTPKEMDDLMFAWRVAKFVKSNAIVFCGGGMTLGVGAGQMSRVDSARIASIKAQNAGLTLAGSAVASDAFFPFRDGLDVVVDAGASCVIQPGGSVRDDEVIAAADERNVAMIFTGTRHFRH</sequence>
<name>PUR9_RALPJ</name>
<organism>
    <name type="scientific">Ralstonia pickettii (strain 12J)</name>
    <dbReference type="NCBI Taxonomy" id="402626"/>
    <lineage>
        <taxon>Bacteria</taxon>
        <taxon>Pseudomonadati</taxon>
        <taxon>Pseudomonadota</taxon>
        <taxon>Betaproteobacteria</taxon>
        <taxon>Burkholderiales</taxon>
        <taxon>Burkholderiaceae</taxon>
        <taxon>Ralstonia</taxon>
    </lineage>
</organism>